<accession>A4YVP2</accession>
<organism>
    <name type="scientific">Bradyrhizobium sp. (strain ORS 278)</name>
    <dbReference type="NCBI Taxonomy" id="114615"/>
    <lineage>
        <taxon>Bacteria</taxon>
        <taxon>Pseudomonadati</taxon>
        <taxon>Pseudomonadota</taxon>
        <taxon>Alphaproteobacteria</taxon>
        <taxon>Hyphomicrobiales</taxon>
        <taxon>Nitrobacteraceae</taxon>
        <taxon>Bradyrhizobium</taxon>
    </lineage>
</organism>
<feature type="chain" id="PRO_1000051176" description="Small ribosomal subunit protein uS9">
    <location>
        <begin position="1"/>
        <end position="160"/>
    </location>
</feature>
<comment type="similarity">
    <text evidence="1">Belongs to the universal ribosomal protein uS9 family.</text>
</comment>
<keyword id="KW-1185">Reference proteome</keyword>
<keyword id="KW-0687">Ribonucleoprotein</keyword>
<keyword id="KW-0689">Ribosomal protein</keyword>
<reference key="1">
    <citation type="journal article" date="2007" name="Science">
        <title>Legumes symbioses: absence of nod genes in photosynthetic bradyrhizobia.</title>
        <authorList>
            <person name="Giraud E."/>
            <person name="Moulin L."/>
            <person name="Vallenet D."/>
            <person name="Barbe V."/>
            <person name="Cytryn E."/>
            <person name="Avarre J.-C."/>
            <person name="Jaubert M."/>
            <person name="Simon D."/>
            <person name="Cartieaux F."/>
            <person name="Prin Y."/>
            <person name="Bena G."/>
            <person name="Hannibal L."/>
            <person name="Fardoux J."/>
            <person name="Kojadinovic M."/>
            <person name="Vuillet L."/>
            <person name="Lajus A."/>
            <person name="Cruveiller S."/>
            <person name="Rouy Z."/>
            <person name="Mangenot S."/>
            <person name="Segurens B."/>
            <person name="Dossat C."/>
            <person name="Franck W.L."/>
            <person name="Chang W.-S."/>
            <person name="Saunders E."/>
            <person name="Bruce D."/>
            <person name="Richardson P."/>
            <person name="Normand P."/>
            <person name="Dreyfus B."/>
            <person name="Pignol D."/>
            <person name="Stacey G."/>
            <person name="Emerich D."/>
            <person name="Vermeglio A."/>
            <person name="Medigue C."/>
            <person name="Sadowsky M."/>
        </authorList>
    </citation>
    <scope>NUCLEOTIDE SEQUENCE [LARGE SCALE GENOMIC DNA]</scope>
    <source>
        <strain>ORS 278</strain>
    </source>
</reference>
<proteinExistence type="inferred from homology"/>
<protein>
    <recommendedName>
        <fullName evidence="1">Small ribosomal subunit protein uS9</fullName>
    </recommendedName>
    <alternativeName>
        <fullName evidence="2">30S ribosomal protein S9</fullName>
    </alternativeName>
</protein>
<sequence length="160" mass="17662">MAESIQSLDQLSQLKGAVTAPDAPKYEKKVDKFGRAYATGKRKDAVARVWIKPGSGKVTVNTRDIEVYFARPVLRMMIEQPMVVAARKGQYDVICTVAGGGLSGQAGAVRHGLSKALTNFEPELRSVLKKGGFLTRDSRVVERKKYGKAKARRSFQFSKR</sequence>
<evidence type="ECO:0000255" key="1">
    <source>
        <dbReference type="HAMAP-Rule" id="MF_00532"/>
    </source>
</evidence>
<evidence type="ECO:0000305" key="2"/>
<dbReference type="EMBL" id="CU234118">
    <property type="protein sequence ID" value="CAL77968.1"/>
    <property type="molecule type" value="Genomic_DNA"/>
</dbReference>
<dbReference type="RefSeq" id="WP_006611043.1">
    <property type="nucleotide sequence ID" value="NC_009445.1"/>
</dbReference>
<dbReference type="SMR" id="A4YVP2"/>
<dbReference type="STRING" id="114615.BRADO4216"/>
<dbReference type="KEGG" id="bra:BRADO4216"/>
<dbReference type="eggNOG" id="COG0103">
    <property type="taxonomic scope" value="Bacteria"/>
</dbReference>
<dbReference type="HOGENOM" id="CLU_046483_2_0_5"/>
<dbReference type="OrthoDB" id="9803965at2"/>
<dbReference type="Proteomes" id="UP000001994">
    <property type="component" value="Chromosome"/>
</dbReference>
<dbReference type="GO" id="GO:0022627">
    <property type="term" value="C:cytosolic small ribosomal subunit"/>
    <property type="evidence" value="ECO:0007669"/>
    <property type="project" value="TreeGrafter"/>
</dbReference>
<dbReference type="GO" id="GO:0003723">
    <property type="term" value="F:RNA binding"/>
    <property type="evidence" value="ECO:0007669"/>
    <property type="project" value="TreeGrafter"/>
</dbReference>
<dbReference type="GO" id="GO:0003735">
    <property type="term" value="F:structural constituent of ribosome"/>
    <property type="evidence" value="ECO:0007669"/>
    <property type="project" value="InterPro"/>
</dbReference>
<dbReference type="GO" id="GO:0006412">
    <property type="term" value="P:translation"/>
    <property type="evidence" value="ECO:0007669"/>
    <property type="project" value="UniProtKB-UniRule"/>
</dbReference>
<dbReference type="FunFam" id="3.30.230.10:FF:000034">
    <property type="entry name" value="30S ribosomal protein S9"/>
    <property type="match status" value="1"/>
</dbReference>
<dbReference type="Gene3D" id="3.30.230.10">
    <property type="match status" value="1"/>
</dbReference>
<dbReference type="HAMAP" id="MF_00532_B">
    <property type="entry name" value="Ribosomal_uS9_B"/>
    <property type="match status" value="1"/>
</dbReference>
<dbReference type="InterPro" id="IPR020568">
    <property type="entry name" value="Ribosomal_Su5_D2-typ_SF"/>
</dbReference>
<dbReference type="InterPro" id="IPR000754">
    <property type="entry name" value="Ribosomal_uS9"/>
</dbReference>
<dbReference type="InterPro" id="IPR023035">
    <property type="entry name" value="Ribosomal_uS9_bac/plastid"/>
</dbReference>
<dbReference type="InterPro" id="IPR020574">
    <property type="entry name" value="Ribosomal_uS9_CS"/>
</dbReference>
<dbReference type="InterPro" id="IPR014721">
    <property type="entry name" value="Ribsml_uS5_D2-typ_fold_subgr"/>
</dbReference>
<dbReference type="NCBIfam" id="NF001099">
    <property type="entry name" value="PRK00132.1"/>
    <property type="match status" value="1"/>
</dbReference>
<dbReference type="PANTHER" id="PTHR21569">
    <property type="entry name" value="RIBOSOMAL PROTEIN S9"/>
    <property type="match status" value="1"/>
</dbReference>
<dbReference type="PANTHER" id="PTHR21569:SF1">
    <property type="entry name" value="SMALL RIBOSOMAL SUBUNIT PROTEIN US9M"/>
    <property type="match status" value="1"/>
</dbReference>
<dbReference type="Pfam" id="PF00380">
    <property type="entry name" value="Ribosomal_S9"/>
    <property type="match status" value="1"/>
</dbReference>
<dbReference type="SUPFAM" id="SSF54211">
    <property type="entry name" value="Ribosomal protein S5 domain 2-like"/>
    <property type="match status" value="1"/>
</dbReference>
<dbReference type="PROSITE" id="PS00360">
    <property type="entry name" value="RIBOSOMAL_S9"/>
    <property type="match status" value="1"/>
</dbReference>
<gene>
    <name evidence="1" type="primary">rpsI</name>
    <name type="ordered locus">BRADO4216</name>
</gene>
<name>RS9_BRASO</name>